<name>LP9A_PENPR</name>
<sequence length="249" mass="26331">MALSKIAALSTILASASLVAGHGYVSSIVANGQNYTGYLADSYPYMSNPPKSVGWATTATDLGFEDGTEYADPNIICHRNGTNAQLSAPVQAGSKVEIQWTPWPDSHHGPVITYLASCNGDCSTVDKSTLEFFKIDAVGLIDDSSVPGTWGTDKLIEAGNRWTVTIPDSIAAGNYVMRHEIIALHSASQKDGAQNYPQCLNLQVTGGGEGVPQGTLGEKLYKDTDPGILVNIYTTLSNYVIPGPALYSG</sequence>
<organism>
    <name type="scientific">Penicillium parvum</name>
    <name type="common">Eupenicillium parvum</name>
    <dbReference type="NCBI Taxonomy" id="70113"/>
    <lineage>
        <taxon>Eukaryota</taxon>
        <taxon>Fungi</taxon>
        <taxon>Dikarya</taxon>
        <taxon>Ascomycota</taxon>
        <taxon>Pezizomycotina</taxon>
        <taxon>Eurotiomycetes</taxon>
        <taxon>Eurotiomycetidae</taxon>
        <taxon>Eurotiales</taxon>
        <taxon>Aspergillaceae</taxon>
        <taxon>Penicillium</taxon>
    </lineage>
</organism>
<evidence type="ECO:0000250" key="1">
    <source>
        <dbReference type="UniProtKB" id="A0A482A9N4"/>
    </source>
</evidence>
<evidence type="ECO:0000250" key="2">
    <source>
        <dbReference type="UniProtKB" id="G3XAP7"/>
    </source>
</evidence>
<evidence type="ECO:0000250" key="3">
    <source>
        <dbReference type="UniProtKB" id="Q1K8B6"/>
    </source>
</evidence>
<evidence type="ECO:0000250" key="4">
    <source>
        <dbReference type="UniProtKB" id="Q4WP32"/>
    </source>
</evidence>
<evidence type="ECO:0000255" key="5"/>
<evidence type="ECO:0000255" key="6">
    <source>
        <dbReference type="PROSITE-ProRule" id="PRU00498"/>
    </source>
</evidence>
<evidence type="ECO:0000255" key="7">
    <source>
        <dbReference type="RuleBase" id="RU368122"/>
    </source>
</evidence>
<evidence type="ECO:0000269" key="8">
    <source>
    </source>
</evidence>
<evidence type="ECO:0000303" key="9">
    <source>
    </source>
</evidence>
<evidence type="ECO:0000305" key="10"/>
<gene>
    <name evidence="9" type="primary">LPMO9A</name>
</gene>
<reference key="1">
    <citation type="journal article" date="2021" name="Int. J. Biol. Macromol.">
        <title>A highly xyloglucan active lytic polysaccharide monooxygenase EpLPMO9A from Eupenicillium parvum 4-14 shows boosting effect on hydrolysis of complex lignocellulosic substrates.</title>
        <authorList>
            <person name="Shi Y."/>
            <person name="Chen K."/>
            <person name="Long L."/>
            <person name="Ding S."/>
        </authorList>
    </citation>
    <scope>NUCLEOTIDE SEQUENCE [MRNA]</scope>
    <scope>FUNCTION</scope>
    <scope>CATALYTIC ACTIVITY</scope>
    <scope>BIOTECHNOLOGY</scope>
    <source>
        <strain>CCTCC M2015404 / 4-14</strain>
    </source>
</reference>
<comment type="function">
    <text evidence="4 8">Lytic polysaccharide monooxygenase (LPMO) that exhibits a mixed C1/C4 oxidative cleavage activity on cellulose and xyloglucan (PubMed:33271180). Catalysis by LPMOs requires the reduction of the active-site copper from Cu(II) to Cu(I) by a reducing agent and H(2)O(2) or O(2) as a cosubstrate (By similarity). Shows a higher boosting effect with cellulases on the enzymatic saccharification of complex lignocellulosic substrates associated with xyloglucan than on the lignocellulosic substrates without xyloglucan (PubMed:33271180). The oxidative cleavage of xyloglucan by LPMO9A may facilitate to open up the sterical hindrance of cellulose by xyloglucan and thereby increase accessibility for cellulase to lignocellulosic substrates (PubMed:33271180).</text>
</comment>
<comment type="catalytic activity">
    <reaction evidence="8">
        <text>[(1-&gt;4)-beta-D-glucosyl]n+m + reduced acceptor + O2 = 4-dehydro-beta-D-glucosyl-[(1-&gt;4)-beta-D-glucosyl]n-1 + [(1-&gt;4)-beta-D-glucosyl]m + acceptor + H2O.</text>
        <dbReference type="EC" id="1.14.99.56"/>
    </reaction>
</comment>
<comment type="cofactor">
    <cofactor evidence="1">
        <name>Cu(2+)</name>
        <dbReference type="ChEBI" id="CHEBI:29036"/>
    </cofactor>
    <text evidence="1">Binds 1 copper ion per subunit.</text>
</comment>
<comment type="subcellular location">
    <subcellularLocation>
        <location evidence="1">Secreted</location>
    </subcellularLocation>
</comment>
<comment type="domain">
    <text evidence="7">Has a modular structure: an endo-beta-1,4-glucanase catalytic module at the N-terminus, a linker rich in serines and threonines, and a C-terminal carbohydrate-binding module (CBM).</text>
</comment>
<comment type="PTM">
    <text evidence="2">The catalytically essential N-terminal histidine His-22 is post-translationally modified by methylation to prevent protonation of the histidine side chain, and protect the critical active site of the enzyme from oxidative damage.</text>
</comment>
<comment type="biotechnology">
    <text evidence="8">Lignocellulose is the most abundant polymeric composite on Earth and is a recalcitrant but promising renewable substrate for industrial biotechnology applications. Together with cellobiose dehydrogenases (CDHs) an enzymatic system capable of oxidative cellulose cleavage is formed, which increases the efficiency of cellulases and put LPMOs at focus of biofuel research.</text>
</comment>
<comment type="similarity">
    <text evidence="10">Belongs to the polysaccharide monooxygenase AA9 family.</text>
</comment>
<proteinExistence type="evidence at protein level"/>
<dbReference type="EC" id="1.14.99.56" evidence="8"/>
<dbReference type="EMBL" id="MN075152">
    <property type="protein sequence ID" value="QHU76777.1"/>
    <property type="molecule type" value="mRNA"/>
</dbReference>
<dbReference type="SMR" id="A0A6C0M6J9"/>
<dbReference type="GO" id="GO:0005576">
    <property type="term" value="C:extracellular region"/>
    <property type="evidence" value="ECO:0007669"/>
    <property type="project" value="UniProtKB-SubCell"/>
</dbReference>
<dbReference type="GO" id="GO:0046872">
    <property type="term" value="F:metal ion binding"/>
    <property type="evidence" value="ECO:0007669"/>
    <property type="project" value="UniProtKB-KW"/>
</dbReference>
<dbReference type="GO" id="GO:0004497">
    <property type="term" value="F:monooxygenase activity"/>
    <property type="evidence" value="ECO:0007669"/>
    <property type="project" value="UniProtKB-KW"/>
</dbReference>
<dbReference type="GO" id="GO:0030245">
    <property type="term" value="P:cellulose catabolic process"/>
    <property type="evidence" value="ECO:0007669"/>
    <property type="project" value="UniProtKB-KW"/>
</dbReference>
<dbReference type="CDD" id="cd21175">
    <property type="entry name" value="LPMO_AA9"/>
    <property type="match status" value="1"/>
</dbReference>
<dbReference type="Gene3D" id="2.70.50.70">
    <property type="match status" value="1"/>
</dbReference>
<dbReference type="InterPro" id="IPR049892">
    <property type="entry name" value="AA9"/>
</dbReference>
<dbReference type="InterPro" id="IPR005103">
    <property type="entry name" value="AA9_LPMO"/>
</dbReference>
<dbReference type="PANTHER" id="PTHR33353:SF34">
    <property type="entry name" value="ENDO-BETA-1,4-GLUCANASE D"/>
    <property type="match status" value="1"/>
</dbReference>
<dbReference type="PANTHER" id="PTHR33353">
    <property type="entry name" value="PUTATIVE (AFU_ORTHOLOGUE AFUA_1G12560)-RELATED"/>
    <property type="match status" value="1"/>
</dbReference>
<dbReference type="Pfam" id="PF03443">
    <property type="entry name" value="AA9"/>
    <property type="match status" value="1"/>
</dbReference>
<accession>A0A6C0M6J9</accession>
<protein>
    <recommendedName>
        <fullName evidence="9">AA9 family lytic polysaccharide monooxygenase A</fullName>
        <shortName evidence="9">LPMO9A</shortName>
        <ecNumber evidence="8">1.14.99.56</ecNumber>
    </recommendedName>
    <alternativeName>
        <fullName evidence="10">Cellulase LPMO9A</fullName>
    </alternativeName>
    <alternativeName>
        <fullName evidence="10">Endo-beta-1,4-glucanase LPMO9A</fullName>
        <shortName evidence="10">Endoglucanase LPMO9A</shortName>
    </alternativeName>
</protein>
<keyword id="KW-0119">Carbohydrate metabolism</keyword>
<keyword id="KW-0136">Cellulose degradation</keyword>
<keyword id="KW-0186">Copper</keyword>
<keyword id="KW-1015">Disulfide bond</keyword>
<keyword id="KW-0325">Glycoprotein</keyword>
<keyword id="KW-0479">Metal-binding</keyword>
<keyword id="KW-0488">Methylation</keyword>
<keyword id="KW-0503">Monooxygenase</keyword>
<keyword id="KW-0560">Oxidoreductase</keyword>
<keyword id="KW-0624">Polysaccharide degradation</keyword>
<keyword id="KW-0964">Secreted</keyword>
<keyword id="KW-0732">Signal</keyword>
<feature type="signal peptide" evidence="5">
    <location>
        <begin position="1"/>
        <end position="21"/>
    </location>
</feature>
<feature type="chain" id="PRO_5025645542" description="AA9 family lytic polysaccharide monooxygenase A">
    <location>
        <begin position="22"/>
        <end position="249"/>
    </location>
</feature>
<feature type="binding site" evidence="1">
    <location>
        <position position="22"/>
    </location>
    <ligand>
        <name>Cu(2+)</name>
        <dbReference type="ChEBI" id="CHEBI:29036"/>
        <note>catalytic</note>
    </ligand>
</feature>
<feature type="binding site" evidence="1">
    <location>
        <position position="107"/>
    </location>
    <ligand>
        <name>Cu(2+)</name>
        <dbReference type="ChEBI" id="CHEBI:29036"/>
        <note>catalytic</note>
    </ligand>
</feature>
<feature type="binding site" evidence="3">
    <location>
        <position position="185"/>
    </location>
    <ligand>
        <name>O2</name>
        <dbReference type="ChEBI" id="CHEBI:15379"/>
    </ligand>
</feature>
<feature type="binding site" evidence="3">
    <location>
        <position position="194"/>
    </location>
    <ligand>
        <name>O2</name>
        <dbReference type="ChEBI" id="CHEBI:15379"/>
    </ligand>
</feature>
<feature type="binding site" evidence="1">
    <location>
        <position position="196"/>
    </location>
    <ligand>
        <name>Cu(2+)</name>
        <dbReference type="ChEBI" id="CHEBI:29036"/>
        <note>catalytic</note>
    </ligand>
</feature>
<feature type="modified residue" description="Methylhistidine" evidence="1">
    <location>
        <position position="22"/>
    </location>
</feature>
<feature type="glycosylation site" description="N-linked (GlcNAc...) asparagine" evidence="6">
    <location>
        <position position="34"/>
    </location>
</feature>
<feature type="glycosylation site" description="N-linked (GlcNAc...) asparagine" evidence="6">
    <location>
        <position position="80"/>
    </location>
</feature>
<feature type="disulfide bond" evidence="1">
    <location>
        <begin position="77"/>
        <end position="199"/>
    </location>
</feature>
<feature type="disulfide bond" evidence="1">
    <location>
        <begin position="118"/>
        <end position="122"/>
    </location>
</feature>